<dbReference type="EMBL" id="CP001010">
    <property type="protein sequence ID" value="ACB44660.1"/>
    <property type="molecule type" value="Genomic_DNA"/>
</dbReference>
<dbReference type="SMR" id="B1XS25"/>
<dbReference type="STRING" id="452638.Pnec_1583"/>
<dbReference type="KEGG" id="pne:Pnec_1583"/>
<dbReference type="eggNOG" id="COG0632">
    <property type="taxonomic scope" value="Bacteria"/>
</dbReference>
<dbReference type="HOGENOM" id="CLU_087936_0_0_4"/>
<dbReference type="OrthoDB" id="5293449at2"/>
<dbReference type="GO" id="GO:0005737">
    <property type="term" value="C:cytoplasm"/>
    <property type="evidence" value="ECO:0007669"/>
    <property type="project" value="UniProtKB-SubCell"/>
</dbReference>
<dbReference type="GO" id="GO:0009379">
    <property type="term" value="C:Holliday junction helicase complex"/>
    <property type="evidence" value="ECO:0007669"/>
    <property type="project" value="InterPro"/>
</dbReference>
<dbReference type="GO" id="GO:0048476">
    <property type="term" value="C:Holliday junction resolvase complex"/>
    <property type="evidence" value="ECO:0007669"/>
    <property type="project" value="UniProtKB-UniRule"/>
</dbReference>
<dbReference type="GO" id="GO:0005524">
    <property type="term" value="F:ATP binding"/>
    <property type="evidence" value="ECO:0007669"/>
    <property type="project" value="InterPro"/>
</dbReference>
<dbReference type="GO" id="GO:0000400">
    <property type="term" value="F:four-way junction DNA binding"/>
    <property type="evidence" value="ECO:0007669"/>
    <property type="project" value="UniProtKB-UniRule"/>
</dbReference>
<dbReference type="GO" id="GO:0009378">
    <property type="term" value="F:four-way junction helicase activity"/>
    <property type="evidence" value="ECO:0007669"/>
    <property type="project" value="InterPro"/>
</dbReference>
<dbReference type="GO" id="GO:0006310">
    <property type="term" value="P:DNA recombination"/>
    <property type="evidence" value="ECO:0007669"/>
    <property type="project" value="UniProtKB-UniRule"/>
</dbReference>
<dbReference type="GO" id="GO:0006281">
    <property type="term" value="P:DNA repair"/>
    <property type="evidence" value="ECO:0007669"/>
    <property type="project" value="UniProtKB-UniRule"/>
</dbReference>
<dbReference type="CDD" id="cd14332">
    <property type="entry name" value="UBA_RuvA_C"/>
    <property type="match status" value="1"/>
</dbReference>
<dbReference type="Gene3D" id="1.10.150.20">
    <property type="entry name" value="5' to 3' exonuclease, C-terminal subdomain"/>
    <property type="match status" value="1"/>
</dbReference>
<dbReference type="Gene3D" id="1.10.8.10">
    <property type="entry name" value="DNA helicase RuvA subunit, C-terminal domain"/>
    <property type="match status" value="1"/>
</dbReference>
<dbReference type="Gene3D" id="2.40.50.140">
    <property type="entry name" value="Nucleic acid-binding proteins"/>
    <property type="match status" value="1"/>
</dbReference>
<dbReference type="HAMAP" id="MF_00031">
    <property type="entry name" value="DNA_HJ_migration_RuvA"/>
    <property type="match status" value="1"/>
</dbReference>
<dbReference type="InterPro" id="IPR013849">
    <property type="entry name" value="DNA_helicase_Holl-junc_RuvA_I"/>
</dbReference>
<dbReference type="InterPro" id="IPR003583">
    <property type="entry name" value="Hlx-hairpin-Hlx_DNA-bd_motif"/>
</dbReference>
<dbReference type="InterPro" id="IPR012340">
    <property type="entry name" value="NA-bd_OB-fold"/>
</dbReference>
<dbReference type="InterPro" id="IPR000085">
    <property type="entry name" value="RuvA"/>
</dbReference>
<dbReference type="InterPro" id="IPR010994">
    <property type="entry name" value="RuvA_2-like"/>
</dbReference>
<dbReference type="InterPro" id="IPR011114">
    <property type="entry name" value="RuvA_C"/>
</dbReference>
<dbReference type="InterPro" id="IPR036267">
    <property type="entry name" value="RuvA_C_sf"/>
</dbReference>
<dbReference type="NCBIfam" id="TIGR00084">
    <property type="entry name" value="ruvA"/>
    <property type="match status" value="1"/>
</dbReference>
<dbReference type="Pfam" id="PF14520">
    <property type="entry name" value="HHH_5"/>
    <property type="match status" value="1"/>
</dbReference>
<dbReference type="Pfam" id="PF07499">
    <property type="entry name" value="RuvA_C"/>
    <property type="match status" value="1"/>
</dbReference>
<dbReference type="Pfam" id="PF01330">
    <property type="entry name" value="RuvA_N"/>
    <property type="match status" value="1"/>
</dbReference>
<dbReference type="SMART" id="SM00278">
    <property type="entry name" value="HhH1"/>
    <property type="match status" value="2"/>
</dbReference>
<dbReference type="SUPFAM" id="SSF46929">
    <property type="entry name" value="DNA helicase RuvA subunit, C-terminal domain"/>
    <property type="match status" value="1"/>
</dbReference>
<dbReference type="SUPFAM" id="SSF50249">
    <property type="entry name" value="Nucleic acid-binding proteins"/>
    <property type="match status" value="1"/>
</dbReference>
<dbReference type="SUPFAM" id="SSF47781">
    <property type="entry name" value="RuvA domain 2-like"/>
    <property type="match status" value="1"/>
</dbReference>
<keyword id="KW-0963">Cytoplasm</keyword>
<keyword id="KW-0227">DNA damage</keyword>
<keyword id="KW-0233">DNA recombination</keyword>
<keyword id="KW-0234">DNA repair</keyword>
<keyword id="KW-0238">DNA-binding</keyword>
<comment type="function">
    <text evidence="1">The RuvA-RuvB-RuvC complex processes Holliday junction (HJ) DNA during genetic recombination and DNA repair, while the RuvA-RuvB complex plays an important role in the rescue of blocked DNA replication forks via replication fork reversal (RFR). RuvA specifically binds to HJ cruciform DNA, conferring on it an open structure. The RuvB hexamer acts as an ATP-dependent pump, pulling dsDNA into and through the RuvAB complex. HJ branch migration allows RuvC to scan DNA until it finds its consensus sequence, where it cleaves and resolves the cruciform DNA.</text>
</comment>
<comment type="subunit">
    <text evidence="1">Homotetramer. Forms an RuvA(8)-RuvB(12)-Holliday junction (HJ) complex. HJ DNA is sandwiched between 2 RuvA tetramers; dsDNA enters through RuvA and exits via RuvB. An RuvB hexamer assembles on each DNA strand where it exits the tetramer. Each RuvB hexamer is contacted by two RuvA subunits (via domain III) on 2 adjacent RuvB subunits; this complex drives branch migration. In the full resolvosome a probable DNA-RuvA(4)-RuvB(12)-RuvC(2) complex forms which resolves the HJ.</text>
</comment>
<comment type="subcellular location">
    <subcellularLocation>
        <location evidence="1">Cytoplasm</location>
    </subcellularLocation>
</comment>
<comment type="domain">
    <text evidence="1">Has three domains with a flexible linker between the domains II and III and assumes an 'L' shape. Domain III is highly mobile and contacts RuvB.</text>
</comment>
<comment type="similarity">
    <text evidence="1">Belongs to the RuvA family.</text>
</comment>
<accession>B1XS25</accession>
<reference key="1">
    <citation type="journal article" date="2013" name="Proc. Natl. Acad. Sci. U.S.A.">
        <title>Polynucleobacter necessarius, a model for genome reduction in both free-living and symbiotic bacteria.</title>
        <authorList>
            <person name="Boscaro V."/>
            <person name="Felletti M."/>
            <person name="Vannini C."/>
            <person name="Ackerman M.S."/>
            <person name="Chain P.S."/>
            <person name="Malfatti S."/>
            <person name="Vergez L.M."/>
            <person name="Shin M."/>
            <person name="Doak T.G."/>
            <person name="Lynch M."/>
            <person name="Petroni G."/>
        </authorList>
    </citation>
    <scope>NUCLEOTIDE SEQUENCE [LARGE SCALE GENOMIC DNA]</scope>
    <source>
        <strain>STIR1</strain>
    </source>
</reference>
<sequence length="193" mass="20699">MIGRIQGTLVSVHPPRLLVDCQGISYEVDVPMSTLYQLPQAGQKITLLTHFQVREDAQQLFGFATETEREAFRQLIKISGVGSRTALAVLSGMSVNELAQAIALQEAGRLTQVPGIGKRTAERLCLELKGKLAPDLGVAGGKPQAIETSSEVLQALLALGYSEKEALLALKQIPADTSISDGIRMGLKYLSKA</sequence>
<proteinExistence type="inferred from homology"/>
<protein>
    <recommendedName>
        <fullName evidence="1">Holliday junction branch migration complex subunit RuvA</fullName>
    </recommendedName>
</protein>
<organism>
    <name type="scientific">Polynucleobacter necessarius subsp. necessarius (strain STIR1)</name>
    <dbReference type="NCBI Taxonomy" id="452638"/>
    <lineage>
        <taxon>Bacteria</taxon>
        <taxon>Pseudomonadati</taxon>
        <taxon>Pseudomonadota</taxon>
        <taxon>Betaproteobacteria</taxon>
        <taxon>Burkholderiales</taxon>
        <taxon>Burkholderiaceae</taxon>
        <taxon>Polynucleobacter</taxon>
    </lineage>
</organism>
<evidence type="ECO:0000255" key="1">
    <source>
        <dbReference type="HAMAP-Rule" id="MF_00031"/>
    </source>
</evidence>
<name>RUVA_POLNS</name>
<feature type="chain" id="PRO_1000090350" description="Holliday junction branch migration complex subunit RuvA">
    <location>
        <begin position="1"/>
        <end position="193"/>
    </location>
</feature>
<feature type="region of interest" description="Domain I" evidence="1">
    <location>
        <begin position="1"/>
        <end position="64"/>
    </location>
</feature>
<feature type="region of interest" description="Domain II" evidence="1">
    <location>
        <begin position="65"/>
        <end position="139"/>
    </location>
</feature>
<feature type="region of interest" description="Flexible linker" evidence="1">
    <location>
        <begin position="139"/>
        <end position="143"/>
    </location>
</feature>
<feature type="region of interest" description="Domain III" evidence="1">
    <location>
        <begin position="144"/>
        <end position="193"/>
    </location>
</feature>
<gene>
    <name evidence="1" type="primary">ruvA</name>
    <name type="ordered locus">Pnec_1583</name>
</gene>